<accession>O46483</accession>
<comment type="function">
    <text>Promotes spermatogenesis and ovulation by stimulating the testes and ovaries to synthesize steroids.</text>
</comment>
<comment type="subunit">
    <text>Heterodimer of a common alpha chain and a unique beta chain which confers biological specificity to thyrotropin, lutropin, follitropin and gonadotropin.</text>
</comment>
<comment type="subcellular location">
    <subcellularLocation>
        <location>Secreted</location>
    </subcellularLocation>
</comment>
<comment type="similarity">
    <text evidence="3">Belongs to the glycoprotein hormones subunit beta family.</text>
</comment>
<organism>
    <name type="scientific">Osphranter rufus</name>
    <name type="common">Red kangaroo</name>
    <name type="synonym">Macropus rufus</name>
    <dbReference type="NCBI Taxonomy" id="9321"/>
    <lineage>
        <taxon>Eukaryota</taxon>
        <taxon>Metazoa</taxon>
        <taxon>Chordata</taxon>
        <taxon>Craniata</taxon>
        <taxon>Vertebrata</taxon>
        <taxon>Euteleostomi</taxon>
        <taxon>Mammalia</taxon>
        <taxon>Metatheria</taxon>
        <taxon>Diprotodontia</taxon>
        <taxon>Macropodidae</taxon>
        <taxon>Osphranter</taxon>
    </lineage>
</organism>
<protein>
    <recommendedName>
        <fullName>Lutropin subunit beta</fullName>
        <shortName>Lutropin beta chain</shortName>
    </recommendedName>
    <alternativeName>
        <fullName>Luteinizing hormone subunit beta</fullName>
        <shortName>LH-B</shortName>
        <shortName>LSH-B</shortName>
        <shortName>LSH-beta</shortName>
    </alternativeName>
</protein>
<evidence type="ECO:0000250" key="1"/>
<evidence type="ECO:0000255" key="2"/>
<evidence type="ECO:0000305" key="3"/>
<sequence>RYQELTVLLLLLLEGGSWGASPLRPLCRPTNATLAAESDACPVCVTFTTTICAGYCPSMVRVLPAALPPSPQLVCTYRELSFSSIRLPGCPPGVDPIFSFPVALSCSCGSCRLSHSDCGGPRAQPHLCTRPHLSLRLL</sequence>
<proteinExistence type="evidence at transcript level"/>
<reference key="1">
    <citation type="journal article" date="1998" name="Mamm. Genome">
        <title>cDNA cloning of luteinizing hormone subunits from brushtail possum and red kangaroo.</title>
        <authorList>
            <person name="Harrison G.A."/>
            <person name="Deane E.M."/>
            <person name="Cooper D.W."/>
        </authorList>
    </citation>
    <scope>NUCLEOTIDE SEQUENCE [MRNA]</scope>
    <source>
        <tissue>Pituitary</tissue>
    </source>
</reference>
<name>LSHB_OSPRU</name>
<gene>
    <name type="primary">LHB</name>
</gene>
<feature type="signal peptide" evidence="2">
    <location>
        <begin position="1" status="less than"/>
        <end position="19"/>
    </location>
</feature>
<feature type="chain" id="PRO_0000011728" description="Lutropin subunit beta">
    <location>
        <begin position="20"/>
        <end position="138"/>
    </location>
</feature>
<feature type="glycosylation site" description="N-linked (GlcNAc...) asparagine" evidence="2">
    <location>
        <position position="31"/>
    </location>
</feature>
<feature type="disulfide bond" evidence="1">
    <location>
        <begin position="27"/>
        <end position="75"/>
    </location>
</feature>
<feature type="disulfide bond" evidence="1">
    <location>
        <begin position="41"/>
        <end position="90"/>
    </location>
</feature>
<feature type="disulfide bond" evidence="1">
    <location>
        <begin position="44"/>
        <end position="128"/>
    </location>
</feature>
<feature type="disulfide bond" evidence="1">
    <location>
        <begin position="52"/>
        <end position="106"/>
    </location>
</feature>
<feature type="disulfide bond" evidence="1">
    <location>
        <begin position="56"/>
        <end position="108"/>
    </location>
</feature>
<feature type="disulfide bond" evidence="1">
    <location>
        <begin position="111"/>
        <end position="118"/>
    </location>
</feature>
<feature type="non-terminal residue">
    <location>
        <position position="1"/>
    </location>
</feature>
<keyword id="KW-1015">Disulfide bond</keyword>
<keyword id="KW-0325">Glycoprotein</keyword>
<keyword id="KW-0372">Hormone</keyword>
<keyword id="KW-0964">Secreted</keyword>
<keyword id="KW-0732">Signal</keyword>
<dbReference type="EMBL" id="AF017450">
    <property type="protein sequence ID" value="AAC96021.1"/>
    <property type="molecule type" value="mRNA"/>
</dbReference>
<dbReference type="SMR" id="O46483"/>
<dbReference type="GlyCosmos" id="O46483">
    <property type="glycosylation" value="1 site, No reported glycans"/>
</dbReference>
<dbReference type="GO" id="GO:0005737">
    <property type="term" value="C:cytoplasm"/>
    <property type="evidence" value="ECO:0007669"/>
    <property type="project" value="TreeGrafter"/>
</dbReference>
<dbReference type="GO" id="GO:0005615">
    <property type="term" value="C:extracellular space"/>
    <property type="evidence" value="ECO:0007669"/>
    <property type="project" value="TreeGrafter"/>
</dbReference>
<dbReference type="GO" id="GO:0005179">
    <property type="term" value="F:hormone activity"/>
    <property type="evidence" value="ECO:0007669"/>
    <property type="project" value="UniProtKB-KW"/>
</dbReference>
<dbReference type="GO" id="GO:0007186">
    <property type="term" value="P:G protein-coupled receptor signaling pathway"/>
    <property type="evidence" value="ECO:0007669"/>
    <property type="project" value="TreeGrafter"/>
</dbReference>
<dbReference type="CDD" id="cd00069">
    <property type="entry name" value="GHB_like"/>
    <property type="match status" value="1"/>
</dbReference>
<dbReference type="FunFam" id="2.10.90.10:FF:000007">
    <property type="entry name" value="Luteinizing hormone beta subunit"/>
    <property type="match status" value="1"/>
</dbReference>
<dbReference type="Gene3D" id="2.10.90.10">
    <property type="entry name" value="Cystine-knot cytokines"/>
    <property type="match status" value="1"/>
</dbReference>
<dbReference type="InterPro" id="IPR029034">
    <property type="entry name" value="Cystine-knot_cytokine"/>
</dbReference>
<dbReference type="InterPro" id="IPR006208">
    <property type="entry name" value="Glyco_hormone_CN"/>
</dbReference>
<dbReference type="InterPro" id="IPR001545">
    <property type="entry name" value="Gonadotropin_bsu"/>
</dbReference>
<dbReference type="InterPro" id="IPR018245">
    <property type="entry name" value="Gonadotropin_bsu_CS"/>
</dbReference>
<dbReference type="PANTHER" id="PTHR11515">
    <property type="entry name" value="GLYCOPROTEIN HORMONE BETA CHAIN"/>
    <property type="match status" value="1"/>
</dbReference>
<dbReference type="PANTHER" id="PTHR11515:SF11">
    <property type="entry name" value="LUTROPIN SUBUNIT BETA"/>
    <property type="match status" value="1"/>
</dbReference>
<dbReference type="Pfam" id="PF00007">
    <property type="entry name" value="Cys_knot"/>
    <property type="match status" value="1"/>
</dbReference>
<dbReference type="SMART" id="SM00068">
    <property type="entry name" value="GHB"/>
    <property type="match status" value="1"/>
</dbReference>
<dbReference type="SUPFAM" id="SSF57501">
    <property type="entry name" value="Cystine-knot cytokines"/>
    <property type="match status" value="1"/>
</dbReference>
<dbReference type="PROSITE" id="PS00261">
    <property type="entry name" value="GLYCO_HORMONE_BETA_1"/>
    <property type="match status" value="1"/>
</dbReference>
<dbReference type="PROSITE" id="PS00689">
    <property type="entry name" value="GLYCO_HORMONE_BETA_2"/>
    <property type="match status" value="1"/>
</dbReference>